<comment type="function">
    <text evidence="5 6 8 9 11 13">Membrane-cytoskeleton-associated protein with F-actin-binding activity that induces F-actin bundles formation and stabilization. Its F-actin-bundling activity is reversibly regulated upon its phosphorylation by the cAMP-dependent protein kinase A (PKA). Binds to the erythrocyte membrane glucose transporter-1 SLC2A1/GLUT1, and hence stabilizes and attaches the spectrin-actin network to the erythrocytic plasma membrane. Plays a role in maintaining the functional integrity of PKA-activated erythrocyte shape and the membrane mechanical properties. Also plays a role as a modulator of actin dynamics in fibroblasts; acts as a negative regulator of the RhoA activation pathway. In platelets, functions as a regulator of internal calcium mobilization across the dense tubular system that affects platelet granule secretion pathways and aggregation. Also required for the formation of a diverse set of cell protrusions, such as filopodia and lamellipodia, necessary for platelet cell spreading, motility and migration. Acts as a tumor suppressor and inhibits malignant cell transformation.</text>
</comment>
<comment type="subunit">
    <text evidence="6 8 9 10 11 12 13 14 18">Monomeric (isoform 2); under reducing conditions. Self-associates. Exists under oxidizing condition as a trimer of two isoforms 2 and isoform 1 linked by disulfide bonds (Probable). Found in a complex with DMTN, F-actin and spectrin. Found in a complex with ADD2, DMTN and SLC2A1. Interacts with F-actin, ITPKB, RASGRF2 and spectrin. Isoform 2 interacts with SLC2A1 (via C-terminus cytoplasmic region). Isoform 1 and isoform 2 interact (phosphorylated form) with plasmodium berghei 14-3-3 protein; the interaction occurs in a PKA-dependent manner.</text>
</comment>
<comment type="interaction">
    <interactant intactId="EBI-715275">
        <id>Q08495</id>
    </interactant>
    <interactant intactId="EBI-742887">
        <id>Q8TAP6</id>
        <label>CEP76</label>
    </interactant>
    <organismsDiffer>false</organismsDiffer>
    <experiments>3</experiments>
</comment>
<comment type="interaction">
    <interactant intactId="EBI-715275">
        <id>Q08495</id>
    </interactant>
    <interactant intactId="EBI-618309">
        <id>Q08379</id>
        <label>GOLGA2</label>
    </interactant>
    <organismsDiffer>false</organismsDiffer>
    <experiments>3</experiments>
</comment>
<comment type="interaction">
    <interactant intactId="EBI-715275">
        <id>Q08495</id>
    </interactant>
    <interactant intactId="EBI-11523345">
        <id>Q8IYF3-3</id>
        <label>TEX11</label>
    </interactant>
    <organismsDiffer>false</organismsDiffer>
    <experiments>3</experiments>
</comment>
<comment type="interaction">
    <interactant intactId="EBI-715275">
        <id>Q08495</id>
    </interactant>
    <interactant intactId="EBI-355744">
        <id>Q12933</id>
        <label>TRAF2</label>
    </interactant>
    <organismsDiffer>false</organismsDiffer>
    <experiments>3</experiments>
</comment>
<comment type="subcellular location">
    <subcellularLocation>
        <location>Cytoplasm</location>
    </subcellularLocation>
    <subcellularLocation>
        <location>Cytoplasm</location>
        <location>Cytosol</location>
    </subcellularLocation>
    <subcellularLocation>
        <location evidence="1">Cytoplasm</location>
        <location evidence="1">Perinuclear region</location>
    </subcellularLocation>
    <subcellularLocation>
        <location>Cytoplasm</location>
        <location>Cytoskeleton</location>
    </subcellularLocation>
    <subcellularLocation>
        <location>Cell membrane</location>
    </subcellularLocation>
    <subcellularLocation>
        <location evidence="1">Membrane</location>
    </subcellularLocation>
    <subcellularLocation>
        <location>Endomembrane system</location>
    </subcellularLocation>
    <subcellularLocation>
        <location evidence="1">Cell projection</location>
    </subcellularLocation>
    <text>Localized at the spectrin-actin junction of erythrocyte plasma membrane. Localized to intracellular membranes and the cytoskeletal network. Localized at intracellular membrane-bounded organelle compartment in platelets that likely represent the dense tubular network membrane. Detected at the cell membrane and at the parasitophorous vacuole in malaria-infected erythrocytes at late stages of plasmodium berghei or falciparum development.</text>
</comment>
<comment type="alternative products">
    <event type="alternative splicing"/>
    <isoform>
        <id>Q08495-1</id>
        <name>1</name>
        <name>Long</name>
        <sequence type="displayed"/>
    </isoform>
    <isoform>
        <id>Q08495-2</id>
        <name>2</name>
        <name>Short</name>
        <sequence type="described" ref="VSP_004189"/>
    </isoform>
    <isoform>
        <id>Q08495-3</id>
        <name>3</name>
        <sequence type="described" ref="VSP_044803 VSP_004189"/>
    </isoform>
    <isoform>
        <id>Q08495-4</id>
        <name>4</name>
        <sequence type="described" ref="VSP_044803 VSP_057428"/>
    </isoform>
</comment>
<comment type="tissue specificity">
    <text evidence="12">Expressed in platelets (at protein level). Expressed in heart, brain, lung, skeletal muscle, and kidney.</text>
</comment>
<comment type="domain">
    <text>Both the N-terminal core domain and the C-terminal headpiece domain are sufficient for binding to F-actin and necessary for actin bundling activity.</text>
</comment>
<comment type="PTM">
    <text evidence="7 11 13 14">Phosphorylated. Phosphorylation at Ser-403 by PKA causes the C-terminal headpiece domain to associate with the N-terminal core domain, and leads to the inhibition of its actin bundling activity.</text>
</comment>
<comment type="PTM">
    <text>The N-terminus is blocked.</text>
</comment>
<comment type="similarity">
    <text evidence="18">Belongs to the villin/gelsolin family.</text>
</comment>
<proteinExistence type="evidence at protein level"/>
<gene>
    <name type="primary">DMTN</name>
    <name type="synonym">DMT</name>
    <name type="synonym">EPB49</name>
</gene>
<name>DEMA_HUMAN</name>
<dbReference type="EMBL" id="L19713">
    <property type="protein sequence ID" value="AAA58438.1"/>
    <property type="molecule type" value="mRNA"/>
</dbReference>
<dbReference type="EMBL" id="U28389">
    <property type="protein sequence ID" value="AAC50223.1"/>
    <property type="molecule type" value="mRNA"/>
</dbReference>
<dbReference type="EMBL" id="AK055842">
    <property type="protein sequence ID" value="BAG51582.1"/>
    <property type="molecule type" value="mRNA"/>
</dbReference>
<dbReference type="EMBL" id="AK091581">
    <property type="protein sequence ID" value="BAG52385.1"/>
    <property type="molecule type" value="mRNA"/>
</dbReference>
<dbReference type="EMBL" id="AK289650">
    <property type="protein sequence ID" value="BAF82339.1"/>
    <property type="molecule type" value="mRNA"/>
</dbReference>
<dbReference type="EMBL" id="AK295452">
    <property type="protein sequence ID" value="BAG58387.1"/>
    <property type="molecule type" value="mRNA"/>
</dbReference>
<dbReference type="EMBL" id="BT007396">
    <property type="protein sequence ID" value="AAP36060.1"/>
    <property type="molecule type" value="mRNA"/>
</dbReference>
<dbReference type="EMBL" id="AC091171">
    <property type="status" value="NOT_ANNOTATED_CDS"/>
    <property type="molecule type" value="Genomic_DNA"/>
</dbReference>
<dbReference type="EMBL" id="BC006318">
    <property type="protein sequence ID" value="AAH06318.1"/>
    <property type="molecule type" value="mRNA"/>
</dbReference>
<dbReference type="EMBL" id="BC017445">
    <property type="protein sequence ID" value="AAH17445.1"/>
    <property type="molecule type" value="mRNA"/>
</dbReference>
<dbReference type="EMBL" id="BC052805">
    <property type="protein sequence ID" value="AAH52805.1"/>
    <property type="molecule type" value="mRNA"/>
</dbReference>
<dbReference type="CCDS" id="CCDS47820.1">
    <molecule id="Q08495-2"/>
</dbReference>
<dbReference type="CCDS" id="CCDS47821.1">
    <molecule id="Q08495-3"/>
</dbReference>
<dbReference type="CCDS" id="CCDS6020.1">
    <molecule id="Q08495-1"/>
</dbReference>
<dbReference type="CCDS" id="CCDS78311.1">
    <molecule id="Q08495-4"/>
</dbReference>
<dbReference type="PIR" id="A48222">
    <property type="entry name" value="A48222"/>
</dbReference>
<dbReference type="PIR" id="I39062">
    <property type="entry name" value="I39062"/>
</dbReference>
<dbReference type="RefSeq" id="NP_001107607.1">
    <molecule id="Q08495-1"/>
    <property type="nucleotide sequence ID" value="NM_001114135.5"/>
</dbReference>
<dbReference type="RefSeq" id="NP_001107608.1">
    <molecule id="Q08495-1"/>
    <property type="nucleotide sequence ID" value="NM_001114136.3"/>
</dbReference>
<dbReference type="RefSeq" id="NP_001107609.1">
    <molecule id="Q08495-2"/>
    <property type="nucleotide sequence ID" value="NM_001114137.4"/>
</dbReference>
<dbReference type="RefSeq" id="NP_001107610.1">
    <molecule id="Q08495-2"/>
    <property type="nucleotide sequence ID" value="NM_001114138.3"/>
</dbReference>
<dbReference type="RefSeq" id="NP_001107611.1">
    <molecule id="Q08495-3"/>
    <property type="nucleotide sequence ID" value="NM_001114139.4"/>
</dbReference>
<dbReference type="RefSeq" id="NP_001289745.1">
    <molecule id="Q08495-2"/>
    <property type="nucleotide sequence ID" value="NM_001302816.3"/>
</dbReference>
<dbReference type="RefSeq" id="NP_001289746.1">
    <molecule id="Q08495-4"/>
    <property type="nucleotide sequence ID" value="NM_001302817.3"/>
</dbReference>
<dbReference type="RefSeq" id="NP_001310307.1">
    <molecule id="Q08495-1"/>
    <property type="nucleotide sequence ID" value="NM_001323378.2"/>
</dbReference>
<dbReference type="RefSeq" id="NP_001310308.1">
    <molecule id="Q08495-1"/>
    <property type="nucleotide sequence ID" value="NM_001323379.2"/>
</dbReference>
<dbReference type="RefSeq" id="NP_001310309.1">
    <molecule id="Q08495-1"/>
    <property type="nucleotide sequence ID" value="NM_001323380.2"/>
</dbReference>
<dbReference type="RefSeq" id="NP_001310310.1">
    <molecule id="Q08495-1"/>
    <property type="nucleotide sequence ID" value="NM_001323381.2"/>
</dbReference>
<dbReference type="RefSeq" id="NP_001310311.1">
    <molecule id="Q08495-1"/>
    <property type="nucleotide sequence ID" value="NM_001323382.2"/>
</dbReference>
<dbReference type="RefSeq" id="NP_001310312.1">
    <molecule id="Q08495-2"/>
    <property type="nucleotide sequence ID" value="NM_001323383.2"/>
</dbReference>
<dbReference type="RefSeq" id="NP_001310313.1">
    <molecule id="Q08495-2"/>
    <property type="nucleotide sequence ID" value="NM_001323384.2"/>
</dbReference>
<dbReference type="RefSeq" id="NP_001310314.1">
    <molecule id="Q08495-2"/>
    <property type="nucleotide sequence ID" value="NM_001323385.2"/>
</dbReference>
<dbReference type="RefSeq" id="NP_001310316.1">
    <molecule id="Q08495-3"/>
    <property type="nucleotide sequence ID" value="NM_001323387.2"/>
</dbReference>
<dbReference type="RefSeq" id="NP_001310317.1">
    <molecule id="Q08495-4"/>
    <property type="nucleotide sequence ID" value="NM_001323388.2"/>
</dbReference>
<dbReference type="RefSeq" id="NP_001310318.1">
    <property type="nucleotide sequence ID" value="NM_001323389.1"/>
</dbReference>
<dbReference type="RefSeq" id="NP_001310319.1">
    <property type="nucleotide sequence ID" value="NM_001323390.1"/>
</dbReference>
<dbReference type="RefSeq" id="NP_001310320.1">
    <property type="nucleotide sequence ID" value="NM_001323391.1"/>
</dbReference>
<dbReference type="RefSeq" id="NP_001310321.1">
    <property type="nucleotide sequence ID" value="NM_001323392.1"/>
</dbReference>
<dbReference type="RefSeq" id="NP_001310322.1">
    <property type="nucleotide sequence ID" value="NM_001323393.1"/>
</dbReference>
<dbReference type="RefSeq" id="NP_001310323.1">
    <property type="nucleotide sequence ID" value="NM_001323394.1"/>
</dbReference>
<dbReference type="RefSeq" id="NP_001310324.1">
    <property type="nucleotide sequence ID" value="NM_001323395.1"/>
</dbReference>
<dbReference type="RefSeq" id="NP_001310325.1">
    <property type="nucleotide sequence ID" value="NM_001323396.1"/>
</dbReference>
<dbReference type="RefSeq" id="NP_001310326.1">
    <property type="nucleotide sequence ID" value="NM_001323397.1"/>
</dbReference>
<dbReference type="RefSeq" id="NP_001310327.1">
    <property type="nucleotide sequence ID" value="NM_001323398.1"/>
</dbReference>
<dbReference type="RefSeq" id="NP_001310328.1">
    <property type="nucleotide sequence ID" value="NM_001323399.1"/>
</dbReference>
<dbReference type="RefSeq" id="NP_001310329.1">
    <property type="nucleotide sequence ID" value="NM_001323400.1"/>
</dbReference>
<dbReference type="RefSeq" id="NP_001310330.1">
    <property type="nucleotide sequence ID" value="NM_001323401.1"/>
</dbReference>
<dbReference type="RefSeq" id="NP_001374655.1">
    <molecule id="Q08495-2"/>
    <property type="nucleotide sequence ID" value="NM_001387726.1"/>
</dbReference>
<dbReference type="RefSeq" id="NP_001374656.1">
    <molecule id="Q08495-1"/>
    <property type="nucleotide sequence ID" value="NM_001387727.1"/>
</dbReference>
<dbReference type="RefSeq" id="NP_001374657.1">
    <molecule id="Q08495-2"/>
    <property type="nucleotide sequence ID" value="NM_001387728.1"/>
</dbReference>
<dbReference type="RefSeq" id="NP_001374659.1">
    <molecule id="Q08495-1"/>
    <property type="nucleotide sequence ID" value="NM_001387730.1"/>
</dbReference>
<dbReference type="RefSeq" id="NP_001374661.1">
    <molecule id="Q08495-1"/>
    <property type="nucleotide sequence ID" value="NM_001387732.1"/>
</dbReference>
<dbReference type="RefSeq" id="NP_001374663.1">
    <molecule id="Q08495-2"/>
    <property type="nucleotide sequence ID" value="NM_001387734.1"/>
</dbReference>
<dbReference type="RefSeq" id="NP_001374664.1">
    <molecule id="Q08495-1"/>
    <property type="nucleotide sequence ID" value="NM_001387735.1"/>
</dbReference>
<dbReference type="RefSeq" id="NP_001374665.1">
    <molecule id="Q08495-3"/>
    <property type="nucleotide sequence ID" value="NM_001387736.1"/>
</dbReference>
<dbReference type="RefSeq" id="NP_001374671.1">
    <molecule id="Q08495-2"/>
    <property type="nucleotide sequence ID" value="NM_001387742.1"/>
</dbReference>
<dbReference type="RefSeq" id="NP_001374673.1">
    <molecule id="Q08495-4"/>
    <property type="nucleotide sequence ID" value="NM_001387744.1"/>
</dbReference>
<dbReference type="RefSeq" id="NP_001374679.1">
    <molecule id="Q08495-1"/>
    <property type="nucleotide sequence ID" value="NM_001387750.1"/>
</dbReference>
<dbReference type="RefSeq" id="NP_001374680.1">
    <molecule id="Q08495-1"/>
    <property type="nucleotide sequence ID" value="NM_001387751.1"/>
</dbReference>
<dbReference type="RefSeq" id="NP_001374681.1">
    <molecule id="Q08495-3"/>
    <property type="nucleotide sequence ID" value="NM_001387752.1"/>
</dbReference>
<dbReference type="RefSeq" id="NP_001374682.1">
    <molecule id="Q08495-1"/>
    <property type="nucleotide sequence ID" value="NM_001387753.1"/>
</dbReference>
<dbReference type="RefSeq" id="NP_001374683.1">
    <molecule id="Q08495-4"/>
    <property type="nucleotide sequence ID" value="NM_001387754.1"/>
</dbReference>
<dbReference type="RefSeq" id="NP_001374684.1">
    <molecule id="Q08495-2"/>
    <property type="nucleotide sequence ID" value="NM_001387755.1"/>
</dbReference>
<dbReference type="RefSeq" id="NP_001374685.1">
    <molecule id="Q08495-3"/>
    <property type="nucleotide sequence ID" value="NM_001387756.1"/>
</dbReference>
<dbReference type="RefSeq" id="NP_001374686.1">
    <molecule id="Q08495-3"/>
    <property type="nucleotide sequence ID" value="NM_001387757.1"/>
</dbReference>
<dbReference type="RefSeq" id="NP_001969.2">
    <molecule id="Q08495-1"/>
    <property type="nucleotide sequence ID" value="NM_001978.5"/>
</dbReference>
<dbReference type="RefSeq" id="XP_005273489.1">
    <property type="nucleotide sequence ID" value="XM_005273432.1"/>
</dbReference>
<dbReference type="RefSeq" id="XP_016868678.1">
    <property type="nucleotide sequence ID" value="XM_017013189.1"/>
</dbReference>
<dbReference type="RefSeq" id="XP_016868682.1">
    <property type="nucleotide sequence ID" value="XM_017013193.1"/>
</dbReference>
<dbReference type="RefSeq" id="XP_016868683.1">
    <molecule id="Q08495-4"/>
    <property type="nucleotide sequence ID" value="XM_017013194.2"/>
</dbReference>
<dbReference type="RefSeq" id="XP_016868684.1">
    <property type="nucleotide sequence ID" value="XM_017013195.1"/>
</dbReference>
<dbReference type="RefSeq" id="XP_016868685.1">
    <property type="nucleotide sequence ID" value="XM_017013196.1"/>
</dbReference>
<dbReference type="RefSeq" id="XP_016868686.1">
    <property type="nucleotide sequence ID" value="XM_017013197.1"/>
</dbReference>
<dbReference type="RefSeq" id="XP_016868687.1">
    <property type="nucleotide sequence ID" value="XM_017013198.1"/>
</dbReference>
<dbReference type="RefSeq" id="XP_047277452.1">
    <molecule id="Q08495-1"/>
    <property type="nucleotide sequence ID" value="XM_047421496.1"/>
</dbReference>
<dbReference type="RefSeq" id="XP_047277453.1">
    <molecule id="Q08495-1"/>
    <property type="nucleotide sequence ID" value="XM_047421497.1"/>
</dbReference>
<dbReference type="RefSeq" id="XP_047277454.1">
    <molecule id="Q08495-1"/>
    <property type="nucleotide sequence ID" value="XM_047421498.1"/>
</dbReference>
<dbReference type="RefSeq" id="XP_047277455.1">
    <molecule id="Q08495-1"/>
    <property type="nucleotide sequence ID" value="XM_047421499.1"/>
</dbReference>
<dbReference type="RefSeq" id="XP_047277458.1">
    <molecule id="Q08495-2"/>
    <property type="nucleotide sequence ID" value="XM_047421502.1"/>
</dbReference>
<dbReference type="RefSeq" id="XP_047277459.1">
    <molecule id="Q08495-2"/>
    <property type="nucleotide sequence ID" value="XM_047421503.1"/>
</dbReference>
<dbReference type="RefSeq" id="XP_047277464.1">
    <molecule id="Q08495-4"/>
    <property type="nucleotide sequence ID" value="XM_047421508.1"/>
</dbReference>
<dbReference type="RefSeq" id="XP_047277465.1">
    <molecule id="Q08495-4"/>
    <property type="nucleotide sequence ID" value="XM_047421509.1"/>
</dbReference>
<dbReference type="RefSeq" id="XP_047277466.1">
    <molecule id="Q08495-3"/>
    <property type="nucleotide sequence ID" value="XM_047421510.1"/>
</dbReference>
<dbReference type="RefSeq" id="XP_047277467.1">
    <molecule id="Q08495-3"/>
    <property type="nucleotide sequence ID" value="XM_047421511.1"/>
</dbReference>
<dbReference type="RefSeq" id="XP_054215986.1">
    <molecule id="Q08495-1"/>
    <property type="nucleotide sequence ID" value="XM_054360011.1"/>
</dbReference>
<dbReference type="RefSeq" id="XP_054215987.1">
    <molecule id="Q08495-1"/>
    <property type="nucleotide sequence ID" value="XM_054360012.1"/>
</dbReference>
<dbReference type="RefSeq" id="XP_054215988.1">
    <molecule id="Q08495-1"/>
    <property type="nucleotide sequence ID" value="XM_054360013.1"/>
</dbReference>
<dbReference type="RefSeq" id="XP_054215989.1">
    <molecule id="Q08495-1"/>
    <property type="nucleotide sequence ID" value="XM_054360014.1"/>
</dbReference>
<dbReference type="RefSeq" id="XP_054215992.1">
    <molecule id="Q08495-2"/>
    <property type="nucleotide sequence ID" value="XM_054360017.1"/>
</dbReference>
<dbReference type="RefSeq" id="XP_054215993.1">
    <molecule id="Q08495-2"/>
    <property type="nucleotide sequence ID" value="XM_054360018.1"/>
</dbReference>
<dbReference type="RefSeq" id="XP_054215998.1">
    <molecule id="Q08495-4"/>
    <property type="nucleotide sequence ID" value="XM_054360023.1"/>
</dbReference>
<dbReference type="RefSeq" id="XP_054215999.1">
    <molecule id="Q08495-4"/>
    <property type="nucleotide sequence ID" value="XM_054360024.1"/>
</dbReference>
<dbReference type="RefSeq" id="XP_054216000.1">
    <molecule id="Q08495-4"/>
    <property type="nucleotide sequence ID" value="XM_054360025.1"/>
</dbReference>
<dbReference type="RefSeq" id="XP_054216001.1">
    <molecule id="Q08495-3"/>
    <property type="nucleotide sequence ID" value="XM_054360026.1"/>
</dbReference>
<dbReference type="RefSeq" id="XP_054216002.1">
    <molecule id="Q08495-3"/>
    <property type="nucleotide sequence ID" value="XM_054360027.1"/>
</dbReference>
<dbReference type="PDB" id="1QZP">
    <property type="method" value="NMR"/>
    <property type="chains" value="A=342-405"/>
</dbReference>
<dbReference type="PDB" id="1ZV6">
    <property type="method" value="NMR"/>
    <property type="chains" value="A=342-405"/>
</dbReference>
<dbReference type="PDBsum" id="1QZP"/>
<dbReference type="PDBsum" id="1ZV6"/>
<dbReference type="BMRB" id="Q08495"/>
<dbReference type="SMR" id="Q08495"/>
<dbReference type="BioGRID" id="108353">
    <property type="interactions" value="36"/>
</dbReference>
<dbReference type="CORUM" id="Q08495"/>
<dbReference type="FunCoup" id="Q08495">
    <property type="interactions" value="208"/>
</dbReference>
<dbReference type="IntAct" id="Q08495">
    <property type="interactions" value="22"/>
</dbReference>
<dbReference type="STRING" id="9606.ENSP00000427866"/>
<dbReference type="GlyCosmos" id="Q08495">
    <property type="glycosylation" value="1 site, 1 glycan"/>
</dbReference>
<dbReference type="GlyGen" id="Q08495">
    <property type="glycosylation" value="3 sites, 1 O-linked glycan (3 sites)"/>
</dbReference>
<dbReference type="iPTMnet" id="Q08495"/>
<dbReference type="PhosphoSitePlus" id="Q08495"/>
<dbReference type="SwissPalm" id="Q08495"/>
<dbReference type="BioMuta" id="DMTN"/>
<dbReference type="DMDM" id="22654240"/>
<dbReference type="jPOST" id="Q08495"/>
<dbReference type="MassIVE" id="Q08495"/>
<dbReference type="PaxDb" id="9606-ENSP00000427866"/>
<dbReference type="PeptideAtlas" id="Q08495"/>
<dbReference type="ProteomicsDB" id="19903"/>
<dbReference type="ProteomicsDB" id="4281"/>
<dbReference type="ProteomicsDB" id="58618">
    <molecule id="Q08495-1"/>
</dbReference>
<dbReference type="ProteomicsDB" id="58619">
    <molecule id="Q08495-2"/>
</dbReference>
<dbReference type="Pumba" id="Q08495"/>
<dbReference type="Antibodypedia" id="9250">
    <property type="antibodies" value="237 antibodies from 31 providers"/>
</dbReference>
<dbReference type="DNASU" id="2039"/>
<dbReference type="Ensembl" id="ENST00000265800.9">
    <molecule id="Q08495-1"/>
    <property type="protein sequence ID" value="ENSP00000265800.5"/>
    <property type="gene ID" value="ENSG00000158856.19"/>
</dbReference>
<dbReference type="Ensembl" id="ENST00000358242.6">
    <molecule id="Q08495-1"/>
    <property type="protein sequence ID" value="ENSP00000350977.3"/>
    <property type="gene ID" value="ENSG00000158856.19"/>
</dbReference>
<dbReference type="Ensembl" id="ENST00000381470.7">
    <molecule id="Q08495-2"/>
    <property type="protein sequence ID" value="ENSP00000370879.3"/>
    <property type="gene ID" value="ENSG00000158856.19"/>
</dbReference>
<dbReference type="Ensembl" id="ENST00000415253.5">
    <molecule id="Q08495-2"/>
    <property type="protein sequence ID" value="ENSP00000401291.1"/>
    <property type="gene ID" value="ENSG00000158856.19"/>
</dbReference>
<dbReference type="Ensembl" id="ENST00000432128.6">
    <molecule id="Q08495-1"/>
    <property type="protein sequence ID" value="ENSP00000416111.1"/>
    <property type="gene ID" value="ENSG00000158856.19"/>
</dbReference>
<dbReference type="Ensembl" id="ENST00000443491.6">
    <molecule id="Q08495-3"/>
    <property type="protein sequence ID" value="ENSP00000397904.2"/>
    <property type="gene ID" value="ENSG00000158856.19"/>
</dbReference>
<dbReference type="Ensembl" id="ENST00000517305.5">
    <molecule id="Q08495-1"/>
    <property type="protein sequence ID" value="ENSP00000430609.2"/>
    <property type="gene ID" value="ENSG00000158856.19"/>
</dbReference>
<dbReference type="Ensembl" id="ENST00000517600.5">
    <molecule id="Q08495-4"/>
    <property type="protein sequence ID" value="ENSP00000430618.1"/>
    <property type="gene ID" value="ENSG00000158856.19"/>
</dbReference>
<dbReference type="Ensembl" id="ENST00000519907.5">
    <molecule id="Q08495-2"/>
    <property type="protein sequence ID" value="ENSP00000429377.1"/>
    <property type="gene ID" value="ENSG00000158856.19"/>
</dbReference>
<dbReference type="Ensembl" id="ENST00000523266.5">
    <molecule id="Q08495-1"/>
    <property type="protein sequence ID" value="ENSP00000427866.1"/>
    <property type="gene ID" value="ENSG00000158856.19"/>
</dbReference>
<dbReference type="Ensembl" id="ENST00000523782.6">
    <molecule id="Q08495-3"/>
    <property type="protein sequence ID" value="ENSP00000429234.2"/>
    <property type="gene ID" value="ENSG00000158856.19"/>
</dbReference>
<dbReference type="GeneID" id="2039"/>
<dbReference type="KEGG" id="hsa:2039"/>
<dbReference type="MANE-Select" id="ENST00000358242.6">
    <property type="protein sequence ID" value="ENSP00000350977.3"/>
    <property type="RefSeq nucleotide sequence ID" value="NM_001387751.1"/>
    <property type="RefSeq protein sequence ID" value="NP_001374680.1"/>
</dbReference>
<dbReference type="UCSC" id="uc064kwf.1">
    <molecule id="Q08495-1"/>
    <property type="organism name" value="human"/>
</dbReference>
<dbReference type="UCSC" id="uc064kwj.1">
    <property type="organism name" value="human"/>
</dbReference>
<dbReference type="AGR" id="HGNC:3382"/>
<dbReference type="CTD" id="2039"/>
<dbReference type="DisGeNET" id="2039"/>
<dbReference type="GeneCards" id="DMTN"/>
<dbReference type="HGNC" id="HGNC:3382">
    <property type="gene designation" value="DMTN"/>
</dbReference>
<dbReference type="HPA" id="ENSG00000158856">
    <property type="expression patterns" value="Tissue enhanced (brain)"/>
</dbReference>
<dbReference type="MIM" id="125305">
    <property type="type" value="gene"/>
</dbReference>
<dbReference type="neXtProt" id="NX_Q08495"/>
<dbReference type="OpenTargets" id="ENSG00000158856"/>
<dbReference type="PharmGKB" id="PA27815"/>
<dbReference type="VEuPathDB" id="HostDB:ENSG00000158856"/>
<dbReference type="eggNOG" id="KOG1044">
    <property type="taxonomic scope" value="Eukaryota"/>
</dbReference>
<dbReference type="GeneTree" id="ENSGT00950000182850"/>
<dbReference type="HOGENOM" id="CLU_001357_12_1_1"/>
<dbReference type="InParanoid" id="Q08495"/>
<dbReference type="OMA" id="MLEHKIY"/>
<dbReference type="OrthoDB" id="1746725at2759"/>
<dbReference type="PAN-GO" id="Q08495">
    <property type="GO annotations" value="5 GO annotations based on evolutionary models"/>
</dbReference>
<dbReference type="PhylomeDB" id="Q08495"/>
<dbReference type="TreeFam" id="TF318042"/>
<dbReference type="PathwayCommons" id="Q08495"/>
<dbReference type="Reactome" id="R-HSA-5223345">
    <property type="pathway name" value="Miscellaneous transport and binding events"/>
</dbReference>
<dbReference type="SignaLink" id="Q08495"/>
<dbReference type="BioGRID-ORCS" id="2039">
    <property type="hits" value="19 hits in 1117 CRISPR screens"/>
</dbReference>
<dbReference type="CD-CODE" id="FB4E32DD">
    <property type="entry name" value="Presynaptic clusters and postsynaptic densities"/>
</dbReference>
<dbReference type="ChiTaRS" id="DMTN">
    <property type="organism name" value="human"/>
</dbReference>
<dbReference type="EvolutionaryTrace" id="Q08495"/>
<dbReference type="GeneWiki" id="EPB49"/>
<dbReference type="GenomeRNAi" id="2039"/>
<dbReference type="Pharos" id="Q08495">
    <property type="development level" value="Tbio"/>
</dbReference>
<dbReference type="PRO" id="PR:Q08495"/>
<dbReference type="Proteomes" id="UP000005640">
    <property type="component" value="Chromosome 8"/>
</dbReference>
<dbReference type="RNAct" id="Q08495">
    <property type="molecule type" value="protein"/>
</dbReference>
<dbReference type="Bgee" id="ENSG00000158856">
    <property type="expression patterns" value="Expressed in right frontal lobe and 188 other cell types or tissues"/>
</dbReference>
<dbReference type="ExpressionAtlas" id="Q08495">
    <property type="expression patterns" value="baseline and differential"/>
</dbReference>
<dbReference type="GO" id="GO:0015629">
    <property type="term" value="C:actin cytoskeleton"/>
    <property type="evidence" value="ECO:0000318"/>
    <property type="project" value="GO_Central"/>
</dbReference>
<dbReference type="GO" id="GO:0005884">
    <property type="term" value="C:actin filament"/>
    <property type="evidence" value="ECO:0000314"/>
    <property type="project" value="UniProtKB"/>
</dbReference>
<dbReference type="GO" id="GO:0031253">
    <property type="term" value="C:cell projection membrane"/>
    <property type="evidence" value="ECO:0000250"/>
    <property type="project" value="UniProtKB"/>
</dbReference>
<dbReference type="GO" id="GO:0030863">
    <property type="term" value="C:cortical cytoskeleton"/>
    <property type="evidence" value="ECO:0007669"/>
    <property type="project" value="Ensembl"/>
</dbReference>
<dbReference type="GO" id="GO:0031410">
    <property type="term" value="C:cytoplasmic vesicle"/>
    <property type="evidence" value="ECO:0000314"/>
    <property type="project" value="UniProtKB"/>
</dbReference>
<dbReference type="GO" id="GO:0005829">
    <property type="term" value="C:cytosol"/>
    <property type="evidence" value="ECO:0000314"/>
    <property type="project" value="UniProtKB"/>
</dbReference>
<dbReference type="GO" id="GO:0048471">
    <property type="term" value="C:perinuclear region of cytoplasm"/>
    <property type="evidence" value="ECO:0000250"/>
    <property type="project" value="UniProtKB"/>
</dbReference>
<dbReference type="GO" id="GO:0005886">
    <property type="term" value="C:plasma membrane"/>
    <property type="evidence" value="ECO:0000314"/>
    <property type="project" value="UniProtKB"/>
</dbReference>
<dbReference type="GO" id="GO:0031095">
    <property type="term" value="C:platelet dense tubular network membrane"/>
    <property type="evidence" value="ECO:0000314"/>
    <property type="project" value="UniProtKB"/>
</dbReference>
<dbReference type="GO" id="GO:0014069">
    <property type="term" value="C:postsynaptic density"/>
    <property type="evidence" value="ECO:0007669"/>
    <property type="project" value="Ensembl"/>
</dbReference>
<dbReference type="GO" id="GO:0005790">
    <property type="term" value="C:smooth endoplasmic reticulum"/>
    <property type="evidence" value="ECO:0007669"/>
    <property type="project" value="GOC"/>
</dbReference>
<dbReference type="GO" id="GO:0014731">
    <property type="term" value="C:spectrin-associated cytoskeleton"/>
    <property type="evidence" value="ECO:0000314"/>
    <property type="project" value="UniProtKB"/>
</dbReference>
<dbReference type="GO" id="GO:0003779">
    <property type="term" value="F:actin binding"/>
    <property type="evidence" value="ECO:0000314"/>
    <property type="project" value="UniProtKB"/>
</dbReference>
<dbReference type="GO" id="GO:0051015">
    <property type="term" value="F:actin filament binding"/>
    <property type="evidence" value="ECO:0000318"/>
    <property type="project" value="GO_Central"/>
</dbReference>
<dbReference type="GO" id="GO:0005102">
    <property type="term" value="F:signaling receptor binding"/>
    <property type="evidence" value="ECO:0000314"/>
    <property type="project" value="UniProtKB"/>
</dbReference>
<dbReference type="GO" id="GO:0030507">
    <property type="term" value="F:spectrin binding"/>
    <property type="evidence" value="ECO:0000314"/>
    <property type="project" value="UniProtKB"/>
</dbReference>
<dbReference type="GO" id="GO:0030036">
    <property type="term" value="P:actin cytoskeleton organization"/>
    <property type="evidence" value="ECO:0000250"/>
    <property type="project" value="UniProtKB"/>
</dbReference>
<dbReference type="GO" id="GO:0051017">
    <property type="term" value="P:actin filament bundle assembly"/>
    <property type="evidence" value="ECO:0000314"/>
    <property type="project" value="UniProtKB"/>
</dbReference>
<dbReference type="GO" id="GO:0051693">
    <property type="term" value="P:actin filament capping"/>
    <property type="evidence" value="ECO:0007669"/>
    <property type="project" value="UniProtKB-KW"/>
</dbReference>
<dbReference type="GO" id="GO:0071320">
    <property type="term" value="P:cellular response to cAMP"/>
    <property type="evidence" value="ECO:0000314"/>
    <property type="project" value="UniProtKB"/>
</dbReference>
<dbReference type="GO" id="GO:0007010">
    <property type="term" value="P:cytoskeleton organization"/>
    <property type="evidence" value="ECO:0000304"/>
    <property type="project" value="UniProtKB"/>
</dbReference>
<dbReference type="GO" id="GO:0071786">
    <property type="term" value="P:endoplasmic reticulum tubular network organization"/>
    <property type="evidence" value="ECO:0000250"/>
    <property type="project" value="UniProtKB"/>
</dbReference>
<dbReference type="GO" id="GO:0048821">
    <property type="term" value="P:erythrocyte development"/>
    <property type="evidence" value="ECO:0000250"/>
    <property type="project" value="UniProtKB"/>
</dbReference>
<dbReference type="GO" id="GO:0030032">
    <property type="term" value="P:lamellipodium assembly"/>
    <property type="evidence" value="ECO:0000318"/>
    <property type="project" value="GO_Central"/>
</dbReference>
<dbReference type="GO" id="GO:0010812">
    <property type="term" value="P:negative regulation of cell-substrate adhesion"/>
    <property type="evidence" value="ECO:0000250"/>
    <property type="project" value="UniProtKB"/>
</dbReference>
<dbReference type="GO" id="GO:0051895">
    <property type="term" value="P:negative regulation of focal adhesion assembly"/>
    <property type="evidence" value="ECO:0000250"/>
    <property type="project" value="UniProtKB"/>
</dbReference>
<dbReference type="GO" id="GO:0033137">
    <property type="term" value="P:negative regulation of peptidyl-serine phosphorylation"/>
    <property type="evidence" value="ECO:0000250"/>
    <property type="project" value="UniProtKB"/>
</dbReference>
<dbReference type="GO" id="GO:0010801">
    <property type="term" value="P:negative regulation of peptidyl-threonine phosphorylation"/>
    <property type="evidence" value="ECO:0000250"/>
    <property type="project" value="UniProtKB"/>
</dbReference>
<dbReference type="GO" id="GO:0050732">
    <property type="term" value="P:negative regulation of peptidyl-tyrosine phosphorylation"/>
    <property type="evidence" value="ECO:0000250"/>
    <property type="project" value="UniProtKB"/>
</dbReference>
<dbReference type="GO" id="GO:0090315">
    <property type="term" value="P:negative regulation of protein targeting to membrane"/>
    <property type="evidence" value="ECO:0000250"/>
    <property type="project" value="UniProtKB"/>
</dbReference>
<dbReference type="GO" id="GO:1900025">
    <property type="term" value="P:negative regulation of substrate adhesion-dependent cell spreading"/>
    <property type="evidence" value="ECO:0000250"/>
    <property type="project" value="UniProtKB"/>
</dbReference>
<dbReference type="GO" id="GO:0010763">
    <property type="term" value="P:positive regulation of fibroblast migration"/>
    <property type="evidence" value="ECO:0000250"/>
    <property type="project" value="UniProtKB"/>
</dbReference>
<dbReference type="GO" id="GO:0090303">
    <property type="term" value="P:positive regulation of wound healing"/>
    <property type="evidence" value="ECO:0000250"/>
    <property type="project" value="UniProtKB"/>
</dbReference>
<dbReference type="GO" id="GO:0065003">
    <property type="term" value="P:protein-containing complex assembly"/>
    <property type="evidence" value="ECO:0000314"/>
    <property type="project" value="UniProtKB"/>
</dbReference>
<dbReference type="GO" id="GO:0032956">
    <property type="term" value="P:regulation of actin cytoskeleton organization"/>
    <property type="evidence" value="ECO:0000314"/>
    <property type="project" value="UniProtKB"/>
</dbReference>
<dbReference type="GO" id="GO:0008360">
    <property type="term" value="P:regulation of cell shape"/>
    <property type="evidence" value="ECO:0000315"/>
    <property type="project" value="UniProtKB"/>
</dbReference>
<dbReference type="GO" id="GO:0051489">
    <property type="term" value="P:regulation of filopodium assembly"/>
    <property type="evidence" value="ECO:0000315"/>
    <property type="project" value="UniProtKB"/>
</dbReference>
<dbReference type="GO" id="GO:0010591">
    <property type="term" value="P:regulation of lamellipodium assembly"/>
    <property type="evidence" value="ECO:0000315"/>
    <property type="project" value="UniProtKB"/>
</dbReference>
<dbReference type="GO" id="GO:0051563">
    <property type="term" value="P:smooth endoplasmic reticulum calcium ion homeostasis"/>
    <property type="evidence" value="ECO:0000250"/>
    <property type="project" value="UniProtKB"/>
</dbReference>
<dbReference type="FunFam" id="1.10.950.10:FF:000002">
    <property type="entry name" value="Dematin isoform X2"/>
    <property type="match status" value="1"/>
</dbReference>
<dbReference type="Gene3D" id="1.10.950.10">
    <property type="entry name" value="Villin headpiece domain"/>
    <property type="match status" value="1"/>
</dbReference>
<dbReference type="InterPro" id="IPR032402">
    <property type="entry name" value="AbLIM_anchor"/>
</dbReference>
<dbReference type="InterPro" id="IPR051618">
    <property type="entry name" value="Actin-binding_LIM"/>
</dbReference>
<dbReference type="InterPro" id="IPR003128">
    <property type="entry name" value="Villin_headpiece"/>
</dbReference>
<dbReference type="InterPro" id="IPR036886">
    <property type="entry name" value="Villin_headpiece_dom_sf"/>
</dbReference>
<dbReference type="PANTHER" id="PTHR24213">
    <property type="entry name" value="ACTIN-BINDING LIM PROTEIN"/>
    <property type="match status" value="1"/>
</dbReference>
<dbReference type="PANTHER" id="PTHR24213:SF17">
    <property type="entry name" value="DEMATIN"/>
    <property type="match status" value="1"/>
</dbReference>
<dbReference type="Pfam" id="PF16182">
    <property type="entry name" value="AbLIM_anchor"/>
    <property type="match status" value="2"/>
</dbReference>
<dbReference type="Pfam" id="PF02209">
    <property type="entry name" value="VHP"/>
    <property type="match status" value="1"/>
</dbReference>
<dbReference type="SMART" id="SM00153">
    <property type="entry name" value="VHP"/>
    <property type="match status" value="1"/>
</dbReference>
<dbReference type="SUPFAM" id="SSF47050">
    <property type="entry name" value="VHP, Villin headpiece domain"/>
    <property type="match status" value="1"/>
</dbReference>
<dbReference type="PROSITE" id="PS51089">
    <property type="entry name" value="HP"/>
    <property type="match status" value="1"/>
</dbReference>
<keyword id="KW-0002">3D-structure</keyword>
<keyword id="KW-0117">Actin capping</keyword>
<keyword id="KW-0009">Actin-binding</keyword>
<keyword id="KW-0025">Alternative splicing</keyword>
<keyword id="KW-1003">Cell membrane</keyword>
<keyword id="KW-0966">Cell projection</keyword>
<keyword id="KW-0963">Cytoplasm</keyword>
<keyword id="KW-0206">Cytoskeleton</keyword>
<keyword id="KW-0903">Direct protein sequencing</keyword>
<keyword id="KW-1015">Disulfide bond</keyword>
<keyword id="KW-0472">Membrane</keyword>
<keyword id="KW-0597">Phosphoprotein</keyword>
<keyword id="KW-1267">Proteomics identification</keyword>
<keyword id="KW-1185">Reference proteome</keyword>
<keyword id="KW-0677">Repeat</keyword>
<keyword id="KW-0043">Tumor suppressor</keyword>
<accession>Q08495</accession>
<accession>A8K0T5</accession>
<accession>B3KP70</accession>
<accession>B3KRH3</accession>
<accession>B4DI75</accession>
<accession>E9PEJ0</accession>
<accession>Q13215</accession>
<accession>Q9BRE3</accession>
<feature type="chain" id="PRO_0000218755" description="Dematin">
    <location>
        <begin position="1"/>
        <end position="405"/>
    </location>
</feature>
<feature type="domain" description="HP" evidence="3">
    <location>
        <begin position="337"/>
        <end position="405"/>
    </location>
</feature>
<feature type="region of interest" description="Disordered" evidence="4">
    <location>
        <begin position="1"/>
        <end position="30"/>
    </location>
</feature>
<feature type="region of interest" description="Disordered" evidence="4">
    <location>
        <begin position="79"/>
        <end position="158"/>
    </location>
</feature>
<feature type="region of interest" description="Disordered" evidence="4">
    <location>
        <begin position="173"/>
        <end position="192"/>
    </location>
</feature>
<feature type="region of interest" description="Disordered" evidence="4">
    <location>
        <begin position="203"/>
        <end position="332"/>
    </location>
</feature>
<feature type="region of interest" description="Interaction with RASGRF2" evidence="6">
    <location>
        <begin position="224"/>
        <end position="308"/>
    </location>
</feature>
<feature type="compositionally biased region" description="Low complexity" evidence="4">
    <location>
        <begin position="11"/>
        <end position="29"/>
    </location>
</feature>
<feature type="compositionally biased region" description="Polar residues" evidence="4">
    <location>
        <begin position="108"/>
        <end position="123"/>
    </location>
</feature>
<feature type="compositionally biased region" description="Acidic residues" evidence="4">
    <location>
        <begin position="216"/>
        <end position="227"/>
    </location>
</feature>
<feature type="compositionally biased region" description="Basic and acidic residues" evidence="4">
    <location>
        <begin position="228"/>
        <end position="242"/>
    </location>
</feature>
<feature type="compositionally biased region" description="Basic and acidic residues" evidence="4">
    <location>
        <begin position="252"/>
        <end position="261"/>
    </location>
</feature>
<feature type="compositionally biased region" description="Polar residues" evidence="4">
    <location>
        <begin position="276"/>
        <end position="322"/>
    </location>
</feature>
<feature type="modified residue" description="Phosphoserine" evidence="24 25">
    <location>
        <position position="16"/>
    </location>
</feature>
<feature type="modified residue" description="Phosphoserine" evidence="24 25">
    <location>
        <position position="18"/>
    </location>
</feature>
<feature type="modified residue" description="Phosphoserine" evidence="24">
    <location>
        <position position="26"/>
    </location>
</feature>
<feature type="modified residue" description="Phosphoserine" evidence="24">
    <location>
        <position position="92"/>
    </location>
</feature>
<feature type="modified residue" description="Phosphoserine" evidence="19 22 24">
    <location>
        <position position="96"/>
    </location>
</feature>
<feature type="modified residue" description="Phosphoserine" evidence="19 22 23 24 25">
    <location>
        <position position="105"/>
    </location>
</feature>
<feature type="modified residue" description="Phosphoserine" evidence="2">
    <location>
        <position position="110"/>
    </location>
</feature>
<feature type="modified residue" description="Phosphoserine" evidence="2">
    <location>
        <position position="113"/>
    </location>
</feature>
<feature type="modified residue" description="Phosphoserine" evidence="19">
    <location>
        <position position="156"/>
    </location>
</feature>
<feature type="modified residue" description="Phosphoserine" evidence="19 20 21 24">
    <location>
        <position position="226"/>
    </location>
</feature>
<feature type="modified residue" description="Phosphoserine" evidence="24">
    <location>
        <position position="269"/>
    </location>
</feature>
<feature type="modified residue" description="Phosphoserine" evidence="24">
    <location>
        <position position="279"/>
    </location>
</feature>
<feature type="modified residue" description="Phosphoserine" evidence="24 25">
    <location>
        <position position="289"/>
    </location>
</feature>
<feature type="modified residue" description="Phosphoserine" evidence="24">
    <location>
        <position position="303"/>
    </location>
</feature>
<feature type="modified residue" description="Phosphoserine" evidence="2">
    <location>
        <position position="315"/>
    </location>
</feature>
<feature type="modified residue" description="Phosphoserine" evidence="19 24">
    <location>
        <position position="333"/>
    </location>
</feature>
<feature type="modified residue" description="Phosphoserine" evidence="19 24 25">
    <location>
        <position position="372"/>
    </location>
</feature>
<feature type="modified residue" description="Phosphoserine" evidence="24">
    <location>
        <position position="383"/>
    </location>
</feature>
<feature type="modified residue" description="Phosphoserine; by PKA" evidence="7 11 13">
    <location>
        <position position="403"/>
    </location>
</feature>
<feature type="splice variant" id="VSP_044803" description="In isoform 3 and isoform 4." evidence="15">
    <location>
        <begin position="7"/>
        <end position="31"/>
    </location>
</feature>
<feature type="splice variant" id="VSP_057428" description="In isoform 4." evidence="15">
    <location>
        <begin position="83"/>
        <end position="97"/>
    </location>
</feature>
<feature type="splice variant" id="VSP_004189" description="In isoform 2 and isoform 3." evidence="15 16 17">
    <location>
        <begin position="320"/>
        <end position="341"/>
    </location>
</feature>
<feature type="mutagenesis site" description="Reduces interaction with plasmodium berghei 14-3-3 protein. Inhibits phosphorylation and interaction with plasmodium berghei 14-3-3 protein; when associated with A-333 and A-403." evidence="10">
    <original>S</original>
    <variation>A</variation>
    <location>
        <position position="124"/>
    </location>
</feature>
<feature type="mutagenesis site" description="Reduces interaction with plasmodium berghei 14-3-3 protein. Inhibits phosphorylation and interaction with plasmodium berghei 14-3-3 protein; when associated with A-124 and A-403." evidence="10">
    <original>S</original>
    <variation>A</variation>
    <location>
        <position position="333"/>
    </location>
</feature>
<feature type="mutagenesis site" description="Inhibits phosphorylation and interaction with plasmodium berghei 14-3-3 protein; when associated with A-124 and A-333." evidence="10 13">
    <original>S</original>
    <variation>A</variation>
    <location>
        <position position="403"/>
    </location>
</feature>
<feature type="mutagenesis site" description="Reduces F-actin bundling but not F-actin binding activity." evidence="10 13">
    <original>S</original>
    <variation>E</variation>
    <location>
        <position position="403"/>
    </location>
</feature>
<feature type="sequence conflict" description="In Ref. 1; AAA58438 and 2; AAC50223." evidence="18" ref="1 2">
    <original>S</original>
    <variation>Q</variation>
    <location>
        <position position="81"/>
    </location>
</feature>
<feature type="sequence conflict" description="In Ref. 3; BAG52385." evidence="18" ref="3">
    <original>G</original>
    <variation>A</variation>
    <location>
        <position position="155"/>
    </location>
</feature>
<feature type="sequence conflict" description="In Ref. 1; AAA58438 and 2; AAC50223." evidence="18" ref="1 2">
    <original>A</original>
    <variation>R</variation>
    <location>
        <position position="292"/>
    </location>
</feature>
<feature type="sequence conflict" description="In Ref. 1; AAA58438." evidence="18" ref="1">
    <original>M</original>
    <variation>V</variation>
    <location>
        <position position="347"/>
    </location>
</feature>
<feature type="sequence conflict" description="In Ref. 1; AAA58438." evidence="18" ref="1">
    <original>F</original>
    <variation>S</variation>
    <location>
        <position position="380"/>
    </location>
</feature>
<feature type="sequence conflict" description="In Ref. 3; BAG52385." evidence="18" ref="3">
    <original>S</original>
    <variation>P</variation>
    <location>
        <position position="403"/>
    </location>
</feature>
<feature type="turn" evidence="26">
    <location>
        <begin position="346"/>
        <end position="348"/>
    </location>
</feature>
<feature type="helix" evidence="26">
    <location>
        <begin position="364"/>
        <end position="366"/>
    </location>
</feature>
<feature type="helix" evidence="26">
    <location>
        <begin position="368"/>
        <end position="370"/>
    </location>
</feature>
<feature type="helix" evidence="26">
    <location>
        <begin position="373"/>
        <end position="379"/>
    </location>
</feature>
<feature type="strand" evidence="26">
    <location>
        <begin position="380"/>
        <end position="382"/>
    </location>
</feature>
<feature type="helix" evidence="26">
    <location>
        <begin position="384"/>
        <end position="389"/>
    </location>
</feature>
<feature type="helix" evidence="26">
    <location>
        <begin position="392"/>
        <end position="402"/>
    </location>
</feature>
<protein>
    <recommendedName>
        <fullName>Dematin</fullName>
    </recommendedName>
    <alternativeName>
        <fullName>Dematin actin-binding protein</fullName>
    </alternativeName>
    <alternativeName>
        <fullName>Erythrocyte membrane protein band 4.9</fullName>
    </alternativeName>
</protein>
<reference key="1">
    <citation type="journal article" date="1993" name="Proc. Natl. Acad. Sci. U.S.A.">
        <title>Cloning of human erythroid dematin reveals another member of the villin family.</title>
        <authorList>
            <person name="Rana A.P."/>
            <person name="Ruff P."/>
            <person name="Maalouf G.J."/>
            <person name="Speicher D.W."/>
            <person name="Chishti A.H."/>
        </authorList>
    </citation>
    <scope>NUCLEOTIDE SEQUENCE [MRNA] (ISOFORM 2)</scope>
    <scope>PARTIAL PROTEIN SEQUENCE</scope>
    <source>
        <tissue>Reticulocyte</tissue>
    </source>
</reference>
<reference key="2">
    <citation type="journal article" date="1995" name="J. Biol. Chem.">
        <title>Isoform cloning, actin binding, and chromosomal localization of human erythroid dematin, a member of the villin superfamily.</title>
        <authorList>
            <person name="Azim A.C."/>
            <person name="Knoll J.H.M."/>
            <person name="Beggs A.H."/>
            <person name="Chishti A.H."/>
        </authorList>
    </citation>
    <scope>NUCLEOTIDE SEQUENCE [MRNA] (ISOFORM 1)</scope>
    <scope>PHOSPHORYLATION BY CAPK</scope>
    <scope>SUBUNIT</scope>
    <scope>ALTERNATIVE SPLICING</scope>
    <source>
        <tissue>Reticulocyte</tissue>
    </source>
</reference>
<reference key="3">
    <citation type="journal article" date="2004" name="Nat. Genet.">
        <title>Complete sequencing and characterization of 21,243 full-length human cDNAs.</title>
        <authorList>
            <person name="Ota T."/>
            <person name="Suzuki Y."/>
            <person name="Nishikawa T."/>
            <person name="Otsuki T."/>
            <person name="Sugiyama T."/>
            <person name="Irie R."/>
            <person name="Wakamatsu A."/>
            <person name="Hayashi K."/>
            <person name="Sato H."/>
            <person name="Nagai K."/>
            <person name="Kimura K."/>
            <person name="Makita H."/>
            <person name="Sekine M."/>
            <person name="Obayashi M."/>
            <person name="Nishi T."/>
            <person name="Shibahara T."/>
            <person name="Tanaka T."/>
            <person name="Ishii S."/>
            <person name="Yamamoto J."/>
            <person name="Saito K."/>
            <person name="Kawai Y."/>
            <person name="Isono Y."/>
            <person name="Nakamura Y."/>
            <person name="Nagahari K."/>
            <person name="Murakami K."/>
            <person name="Yasuda T."/>
            <person name="Iwayanagi T."/>
            <person name="Wagatsuma M."/>
            <person name="Shiratori A."/>
            <person name="Sudo H."/>
            <person name="Hosoiri T."/>
            <person name="Kaku Y."/>
            <person name="Kodaira H."/>
            <person name="Kondo H."/>
            <person name="Sugawara M."/>
            <person name="Takahashi M."/>
            <person name="Kanda K."/>
            <person name="Yokoi T."/>
            <person name="Furuya T."/>
            <person name="Kikkawa E."/>
            <person name="Omura Y."/>
            <person name="Abe K."/>
            <person name="Kamihara K."/>
            <person name="Katsuta N."/>
            <person name="Sato K."/>
            <person name="Tanikawa M."/>
            <person name="Yamazaki M."/>
            <person name="Ninomiya K."/>
            <person name="Ishibashi T."/>
            <person name="Yamashita H."/>
            <person name="Murakawa K."/>
            <person name="Fujimori K."/>
            <person name="Tanai H."/>
            <person name="Kimata M."/>
            <person name="Watanabe M."/>
            <person name="Hiraoka S."/>
            <person name="Chiba Y."/>
            <person name="Ishida S."/>
            <person name="Ono Y."/>
            <person name="Takiguchi S."/>
            <person name="Watanabe S."/>
            <person name="Yosida M."/>
            <person name="Hotuta T."/>
            <person name="Kusano J."/>
            <person name="Kanehori K."/>
            <person name="Takahashi-Fujii A."/>
            <person name="Hara H."/>
            <person name="Tanase T.-O."/>
            <person name="Nomura Y."/>
            <person name="Togiya S."/>
            <person name="Komai F."/>
            <person name="Hara R."/>
            <person name="Takeuchi K."/>
            <person name="Arita M."/>
            <person name="Imose N."/>
            <person name="Musashino K."/>
            <person name="Yuuki H."/>
            <person name="Oshima A."/>
            <person name="Sasaki N."/>
            <person name="Aotsuka S."/>
            <person name="Yoshikawa Y."/>
            <person name="Matsunawa H."/>
            <person name="Ichihara T."/>
            <person name="Shiohata N."/>
            <person name="Sano S."/>
            <person name="Moriya S."/>
            <person name="Momiyama H."/>
            <person name="Satoh N."/>
            <person name="Takami S."/>
            <person name="Terashima Y."/>
            <person name="Suzuki O."/>
            <person name="Nakagawa S."/>
            <person name="Senoh A."/>
            <person name="Mizoguchi H."/>
            <person name="Goto Y."/>
            <person name="Shimizu F."/>
            <person name="Wakebe H."/>
            <person name="Hishigaki H."/>
            <person name="Watanabe T."/>
            <person name="Sugiyama A."/>
            <person name="Takemoto M."/>
            <person name="Kawakami B."/>
            <person name="Yamazaki M."/>
            <person name="Watanabe K."/>
            <person name="Kumagai A."/>
            <person name="Itakura S."/>
            <person name="Fukuzumi Y."/>
            <person name="Fujimori Y."/>
            <person name="Komiyama M."/>
            <person name="Tashiro H."/>
            <person name="Tanigami A."/>
            <person name="Fujiwara T."/>
            <person name="Ono T."/>
            <person name="Yamada K."/>
            <person name="Fujii Y."/>
            <person name="Ozaki K."/>
            <person name="Hirao M."/>
            <person name="Ohmori Y."/>
            <person name="Kawabata A."/>
            <person name="Hikiji T."/>
            <person name="Kobatake N."/>
            <person name="Inagaki H."/>
            <person name="Ikema Y."/>
            <person name="Okamoto S."/>
            <person name="Okitani R."/>
            <person name="Kawakami T."/>
            <person name="Noguchi S."/>
            <person name="Itoh T."/>
            <person name="Shigeta K."/>
            <person name="Senba T."/>
            <person name="Matsumura K."/>
            <person name="Nakajima Y."/>
            <person name="Mizuno T."/>
            <person name="Morinaga M."/>
            <person name="Sasaki M."/>
            <person name="Togashi T."/>
            <person name="Oyama M."/>
            <person name="Hata H."/>
            <person name="Watanabe M."/>
            <person name="Komatsu T."/>
            <person name="Mizushima-Sugano J."/>
            <person name="Satoh T."/>
            <person name="Shirai Y."/>
            <person name="Takahashi Y."/>
            <person name="Nakagawa K."/>
            <person name="Okumura K."/>
            <person name="Nagase T."/>
            <person name="Nomura N."/>
            <person name="Kikuchi H."/>
            <person name="Masuho Y."/>
            <person name="Yamashita R."/>
            <person name="Nakai K."/>
            <person name="Yada T."/>
            <person name="Nakamura Y."/>
            <person name="Ohara O."/>
            <person name="Isogai T."/>
            <person name="Sugano S."/>
        </authorList>
    </citation>
    <scope>NUCLEOTIDE SEQUENCE [LARGE SCALE MRNA] (ISOFORMS 1; 2; 3 AND 4)</scope>
    <source>
        <tissue>Amygdala</tissue>
        <tissue>Brain</tissue>
        <tissue>Hippocampus</tissue>
        <tissue>Kidney</tissue>
    </source>
</reference>
<reference key="4">
    <citation type="submission" date="2003-05" db="EMBL/GenBank/DDBJ databases">
        <title>Cloning of human full-length CDSs in BD Creator(TM) system donor vector.</title>
        <authorList>
            <person name="Kalnine N."/>
            <person name="Chen X."/>
            <person name="Rolfs A."/>
            <person name="Halleck A."/>
            <person name="Hines L."/>
            <person name="Eisenstein S."/>
            <person name="Koundinya M."/>
            <person name="Raphael J."/>
            <person name="Moreira D."/>
            <person name="Kelley T."/>
            <person name="LaBaer J."/>
            <person name="Lin Y."/>
            <person name="Phelan M."/>
            <person name="Farmer A."/>
        </authorList>
    </citation>
    <scope>NUCLEOTIDE SEQUENCE [LARGE SCALE MRNA] (ISOFORM 1)</scope>
</reference>
<reference key="5">
    <citation type="journal article" date="2006" name="Nature">
        <title>DNA sequence and analysis of human chromosome 8.</title>
        <authorList>
            <person name="Nusbaum C."/>
            <person name="Mikkelsen T.S."/>
            <person name="Zody M.C."/>
            <person name="Asakawa S."/>
            <person name="Taudien S."/>
            <person name="Garber M."/>
            <person name="Kodira C.D."/>
            <person name="Schueler M.G."/>
            <person name="Shimizu A."/>
            <person name="Whittaker C.A."/>
            <person name="Chang J.L."/>
            <person name="Cuomo C.A."/>
            <person name="Dewar K."/>
            <person name="FitzGerald M.G."/>
            <person name="Yang X."/>
            <person name="Allen N.R."/>
            <person name="Anderson S."/>
            <person name="Asakawa T."/>
            <person name="Blechschmidt K."/>
            <person name="Bloom T."/>
            <person name="Borowsky M.L."/>
            <person name="Butler J."/>
            <person name="Cook A."/>
            <person name="Corum B."/>
            <person name="DeArellano K."/>
            <person name="DeCaprio D."/>
            <person name="Dooley K.T."/>
            <person name="Dorris L. III"/>
            <person name="Engels R."/>
            <person name="Gloeckner G."/>
            <person name="Hafez N."/>
            <person name="Hagopian D.S."/>
            <person name="Hall J.L."/>
            <person name="Ishikawa S.K."/>
            <person name="Jaffe D.B."/>
            <person name="Kamat A."/>
            <person name="Kudoh J."/>
            <person name="Lehmann R."/>
            <person name="Lokitsang T."/>
            <person name="Macdonald P."/>
            <person name="Major J.E."/>
            <person name="Matthews C.D."/>
            <person name="Mauceli E."/>
            <person name="Menzel U."/>
            <person name="Mihalev A.H."/>
            <person name="Minoshima S."/>
            <person name="Murayama Y."/>
            <person name="Naylor J.W."/>
            <person name="Nicol R."/>
            <person name="Nguyen C."/>
            <person name="O'Leary S.B."/>
            <person name="O'Neill K."/>
            <person name="Parker S.C.J."/>
            <person name="Polley A."/>
            <person name="Raymond C.K."/>
            <person name="Reichwald K."/>
            <person name="Rodriguez J."/>
            <person name="Sasaki T."/>
            <person name="Schilhabel M."/>
            <person name="Siddiqui R."/>
            <person name="Smith C.L."/>
            <person name="Sneddon T.P."/>
            <person name="Talamas J.A."/>
            <person name="Tenzin P."/>
            <person name="Topham K."/>
            <person name="Venkataraman V."/>
            <person name="Wen G."/>
            <person name="Yamazaki S."/>
            <person name="Young S.K."/>
            <person name="Zeng Q."/>
            <person name="Zimmer A.R."/>
            <person name="Rosenthal A."/>
            <person name="Birren B.W."/>
            <person name="Platzer M."/>
            <person name="Shimizu N."/>
            <person name="Lander E.S."/>
        </authorList>
    </citation>
    <scope>NUCLEOTIDE SEQUENCE [LARGE SCALE GENOMIC DNA]</scope>
</reference>
<reference key="6">
    <citation type="journal article" date="2004" name="Genome Res.">
        <title>The status, quality, and expansion of the NIH full-length cDNA project: the Mammalian Gene Collection (MGC).</title>
        <authorList>
            <consortium name="The MGC Project Team"/>
        </authorList>
    </citation>
    <scope>NUCLEOTIDE SEQUENCE [LARGE SCALE MRNA] (ISOFORMS 1 AND 2)</scope>
    <source>
        <tissue>Brain</tissue>
        <tissue>Liver</tissue>
    </source>
</reference>
<reference key="7">
    <citation type="journal article" date="1999" name="Cancer Genet. Cytogenet.">
        <title>Loss of heterozygosity on 8p in prostate cancer implicates a role for dematin in tumor progression.</title>
        <authorList>
            <person name="Lutchman M."/>
            <person name="Pack S."/>
            <person name="Kim A.C."/>
            <person name="Azim A."/>
            <person name="Emmert-Buck M."/>
            <person name="van Huffel C."/>
            <person name="Zhuang Z."/>
            <person name="Chishti A.H."/>
        </authorList>
    </citation>
    <scope>FUNCTION</scope>
</reference>
<reference key="8">
    <citation type="journal article" date="2002" name="Eur. J. Biochem.">
        <title>Dematin interacts with the Ras-guanine nucleotide exchange factor Ras-GRF2 and modulates mitogen-activated protein kinase pathways.</title>
        <authorList>
            <person name="Lutchman M."/>
            <person name="Kim A.C."/>
            <person name="Cheng L."/>
            <person name="Whitehead I.P."/>
            <person name="Oh S.S."/>
            <person name="Hanspal M."/>
            <person name="Boukharov A.A."/>
            <person name="Hanada T."/>
            <person name="Chishti A.H."/>
        </authorList>
    </citation>
    <scope>FUNCTION</scope>
    <scope>INTERACTION WITH RASGRF2</scope>
    <scope>SUBCELLULAR LOCATION</scope>
</reference>
<reference key="9">
    <citation type="journal article" date="2008" name="J. Biol. Chem.">
        <title>Dematin and adducin provide a novel link between the spectrin cytoskeleton and human erythrocyte membrane by directly interacting with glucose transporter-1.</title>
        <authorList>
            <person name="Khan A.A."/>
            <person name="Hanada T."/>
            <person name="Mohseni M."/>
            <person name="Jeong J.J."/>
            <person name="Zeng L."/>
            <person name="Gaetani M."/>
            <person name="Li D."/>
            <person name="Reed B.C."/>
            <person name="Speicher D.W."/>
            <person name="Chishti A.H."/>
        </authorList>
    </citation>
    <scope>FUNCTION</scope>
    <scope>IDENTIFICATION IN A COMPLEX WITH ADD2 AND SLC2A1</scope>
    <scope>INTERACTION WITH SLC2A1</scope>
</reference>
<reference key="10">
    <citation type="journal article" date="2008" name="J. Proteome Res.">
        <title>Phosphorylation analysis of primary human T lymphocytes using sequential IMAC and titanium oxide enrichment.</title>
        <authorList>
            <person name="Carrascal M."/>
            <person name="Ovelleiro D."/>
            <person name="Casas V."/>
            <person name="Gay M."/>
            <person name="Abian J."/>
        </authorList>
    </citation>
    <scope>PHOSPHORYLATION [LARGE SCALE ANALYSIS] AT SER-226</scope>
    <scope>IDENTIFICATION BY MASS SPECTROMETRY [LARGE SCALE ANALYSIS]</scope>
    <source>
        <tissue>T-cell</tissue>
    </source>
</reference>
<reference key="11">
    <citation type="journal article" date="2008" name="J. Proteome Res.">
        <title>Phosphoproteome of resting human platelets.</title>
        <authorList>
            <person name="Zahedi R.P."/>
            <person name="Lewandrowski U."/>
            <person name="Wiesner J."/>
            <person name="Wortelkamp S."/>
            <person name="Moebius J."/>
            <person name="Schuetz C."/>
            <person name="Walter U."/>
            <person name="Gambaryan S."/>
            <person name="Sickmann A."/>
        </authorList>
    </citation>
    <scope>PHOSPHORYLATION [LARGE SCALE ANALYSIS] AT SER-96; SER-105; SER-156; SER-226; SER-333 AND SER-372</scope>
    <scope>IDENTIFICATION BY MASS SPECTROMETRY [LARGE SCALE ANALYSIS]</scope>
    <source>
        <tissue>Platelet</tissue>
    </source>
</reference>
<reference key="12">
    <citation type="journal article" date="2008" name="Proteomics">
        <title>Large-scale phosphoproteome analysis of human liver tissue by enrichment and fractionation of phosphopeptides with strong anion exchange chromatography.</title>
        <authorList>
            <person name="Han G."/>
            <person name="Ye M."/>
            <person name="Zhou H."/>
            <person name="Jiang X."/>
            <person name="Feng S."/>
            <person name="Jiang X."/>
            <person name="Tian R."/>
            <person name="Wan D."/>
            <person name="Zou H."/>
            <person name="Gu J."/>
        </authorList>
    </citation>
    <scope>PHOSPHORYLATION [LARGE SCALE ANALYSIS] AT SER-226</scope>
    <scope>IDENTIFICATION BY MASS SPECTROMETRY [LARGE SCALE ANALYSIS]</scope>
    <source>
        <tissue>Liver</tissue>
    </source>
</reference>
<reference key="13">
    <citation type="journal article" date="2009" name="Protein Sci.">
        <title>Dematin exhibits a natively unfolded core domain and an independently folded headpiece domain.</title>
        <authorList>
            <person name="Chen L."/>
            <person name="Jiang Z.G."/>
            <person name="Khan A.A."/>
            <person name="Chishti A.H."/>
            <person name="McKnight C.J."/>
        </authorList>
    </citation>
    <scope>FUNCTION</scope>
    <scope>INTERACTION WITH F-ACTIN</scope>
</reference>
<reference key="14">
    <citation type="journal article" date="2009" name="Sci. Signal.">
        <title>Quantitative phosphoproteomic analysis of T cell receptor signaling reveals system-wide modulation of protein-protein interactions.</title>
        <authorList>
            <person name="Mayya V."/>
            <person name="Lundgren D.H."/>
            <person name="Hwang S.-I."/>
            <person name="Rezaul K."/>
            <person name="Wu L."/>
            <person name="Eng J.K."/>
            <person name="Rodionov V."/>
            <person name="Han D.K."/>
        </authorList>
    </citation>
    <scope>PHOSPHORYLATION [LARGE SCALE ANALYSIS] AT SER-96 AND SER-105</scope>
    <scope>IDENTIFICATION BY MASS SPECTROMETRY [LARGE SCALE ANALYSIS]</scope>
    <source>
        <tissue>Leukemic T-cell</tissue>
    </source>
</reference>
<reference key="15">
    <citation type="journal article" date="2010" name="Sci. Signal.">
        <title>Quantitative phosphoproteomics reveals widespread full phosphorylation site occupancy during mitosis.</title>
        <authorList>
            <person name="Olsen J.V."/>
            <person name="Vermeulen M."/>
            <person name="Santamaria A."/>
            <person name="Kumar C."/>
            <person name="Miller M.L."/>
            <person name="Jensen L.J."/>
            <person name="Gnad F."/>
            <person name="Cox J."/>
            <person name="Jensen T.S."/>
            <person name="Nigg E.A."/>
            <person name="Brunak S."/>
            <person name="Mann M."/>
        </authorList>
    </citation>
    <scope>PHOSPHORYLATION [LARGE SCALE ANALYSIS] AT SER-105</scope>
    <scope>IDENTIFICATION BY MASS SPECTROMETRY [LARGE SCALE ANALYSIS]</scope>
    <source>
        <tissue>Cervix carcinoma</tissue>
    </source>
</reference>
<reference key="16">
    <citation type="journal article" date="2011" name="J. Biol. Chem.">
        <title>Dematin, a component of the erythrocyte membrane skeleton, is internalized by the malaria parasite and associates with Plasmodium 14-3-3.</title>
        <authorList>
            <person name="Lalle M."/>
            <person name="Curra C."/>
            <person name="Ciccarone F."/>
            <person name="Pace T."/>
            <person name="Cecchetti S."/>
            <person name="Fantozzi L."/>
            <person name="Ay B."/>
            <person name="Breton C.B."/>
            <person name="Ponzi M."/>
        </authorList>
    </citation>
    <scope>INTERACTION WITH PLASMODIUM BERGHEI 14-3-3 PROTEIN</scope>
    <scope>SUBCELLULAR LOCATION</scope>
    <scope>MUTAGENESIS OF SER-124; SER-333 AND SER-403</scope>
</reference>
<reference key="17">
    <citation type="journal article" date="2012" name="J. Biol. Chem.">
        <title>Identification of a novel role for dematin in regulating red cell membrane function by modulating spectrin-actin interaction.</title>
        <authorList>
            <person name="Koshino I."/>
            <person name="Mohandas N."/>
            <person name="Takakuwa Y."/>
        </authorList>
    </citation>
    <scope>FUNCTION</scope>
    <scope>PHOSPHORYLATION AT SER-403</scope>
    <scope>IDENTIFICATION IN A COMPLEX WITH SPECTRIN AND F-ACTIN</scope>
</reference>
<reference key="18">
    <citation type="journal article" date="2012" name="J. Biol. Chem.">
        <title>Headpiece domain of dematin regulates calcium mobilization and signaling in platelets.</title>
        <authorList>
            <person name="Wieschhaus A.J."/>
            <person name="Le Breton G.C."/>
            <person name="Chishti A.H."/>
        </authorList>
    </citation>
    <scope>INTERACTION WITH DMTN</scope>
    <scope>SUBCELLULAR LOCATION</scope>
    <scope>TISSUE SPECIFICITY</scope>
</reference>
<reference key="19">
    <citation type="journal article" date="2013" name="J. Biol. Chem.">
        <title>The allosteric mechanism induced by protein kinase A (PKA) phosphorylation of dematin (band 4.9).</title>
        <authorList>
            <person name="Chen L."/>
            <person name="Brown J.W."/>
            <person name="Mok Y.F."/>
            <person name="Hatters D.M."/>
            <person name="McKnight C.J."/>
        </authorList>
    </citation>
    <scope>FUNCTION</scope>
    <scope>SUBUNIT</scope>
    <scope>PHOSPHORYLATION AT SER-403</scope>
    <scope>MUTAGENESIS OF SER-403</scope>
</reference>
<reference key="20">
    <citation type="journal article" date="2013" name="J. Proteome Res.">
        <title>Toward a comprehensive characterization of a human cancer cell phosphoproteome.</title>
        <authorList>
            <person name="Zhou H."/>
            <person name="Di Palma S."/>
            <person name="Preisinger C."/>
            <person name="Peng M."/>
            <person name="Polat A.N."/>
            <person name="Heck A.J."/>
            <person name="Mohammed S."/>
        </authorList>
    </citation>
    <scope>PHOSPHORYLATION [LARGE SCALE ANALYSIS] AT SER-16; SER-18; SER-26; SER-92; SER-96; SER-105; SER-226; SER-269; SER-279; SER-289; SER-303; SER-333; SER-372 AND SER-383</scope>
    <scope>IDENTIFICATION BY MASS SPECTROMETRY [LARGE SCALE ANALYSIS]</scope>
    <source>
        <tissue>Cervix carcinoma</tissue>
        <tissue>Erythroleukemia</tissue>
    </source>
</reference>
<reference key="21">
    <citation type="journal article" date="2014" name="J. Proteomics">
        <title>An enzyme assisted RP-RPLC approach for in-depth analysis of human liver phosphoproteome.</title>
        <authorList>
            <person name="Bian Y."/>
            <person name="Song C."/>
            <person name="Cheng K."/>
            <person name="Dong M."/>
            <person name="Wang F."/>
            <person name="Huang J."/>
            <person name="Sun D."/>
            <person name="Wang L."/>
            <person name="Ye M."/>
            <person name="Zou H."/>
        </authorList>
    </citation>
    <scope>PHOSPHORYLATION [LARGE SCALE ANALYSIS] AT SER-16; SER-18; SER-105; SER-289 AND SER-372</scope>
    <scope>IDENTIFICATION BY MASS SPECTROMETRY [LARGE SCALE ANALYSIS]</scope>
    <source>
        <tissue>Liver</tissue>
    </source>
</reference>
<reference key="22">
    <citation type="journal article" date="2004" name="J. Biol. Chem.">
        <title>The NMR structure of dematin headpiece reveals a dynamic loop that is conformationally altered upon phosphorylation at a distal site.</title>
        <authorList>
            <person name="Frank B.S."/>
            <person name="Vardar D."/>
            <person name="Chishti A.H."/>
            <person name="McKnight C.J."/>
        </authorList>
    </citation>
    <scope>STRUCTURE BY NMR OF 342-405</scope>
</reference>
<reference key="23">
    <citation type="journal article" date="2006" name="Structure">
        <title>A phosphorylation-induced conformation change in dematin headpiece.</title>
        <authorList>
            <person name="Jiang Z.G."/>
            <person name="McKnight C.J."/>
        </authorList>
    </citation>
    <scope>STRUCTURE BY NMR OF 342-405</scope>
    <scope>PHOSPHORYLATION AT SER-403</scope>
</reference>
<evidence type="ECO:0000250" key="1"/>
<evidence type="ECO:0000250" key="2">
    <source>
        <dbReference type="UniProtKB" id="Q9WV69"/>
    </source>
</evidence>
<evidence type="ECO:0000255" key="3">
    <source>
        <dbReference type="PROSITE-ProRule" id="PRU00595"/>
    </source>
</evidence>
<evidence type="ECO:0000256" key="4">
    <source>
        <dbReference type="SAM" id="MobiDB-lite"/>
    </source>
</evidence>
<evidence type="ECO:0000269" key="5">
    <source>
    </source>
</evidence>
<evidence type="ECO:0000269" key="6">
    <source>
    </source>
</evidence>
<evidence type="ECO:0000269" key="7">
    <source>
    </source>
</evidence>
<evidence type="ECO:0000269" key="8">
    <source>
    </source>
</evidence>
<evidence type="ECO:0000269" key="9">
    <source>
    </source>
</evidence>
<evidence type="ECO:0000269" key="10">
    <source>
    </source>
</evidence>
<evidence type="ECO:0000269" key="11">
    <source>
    </source>
</evidence>
<evidence type="ECO:0000269" key="12">
    <source>
    </source>
</evidence>
<evidence type="ECO:0000269" key="13">
    <source>
    </source>
</evidence>
<evidence type="ECO:0000269" key="14">
    <source>
    </source>
</evidence>
<evidence type="ECO:0000303" key="15">
    <source>
    </source>
</evidence>
<evidence type="ECO:0000303" key="16">
    <source>
    </source>
</evidence>
<evidence type="ECO:0000303" key="17">
    <source>
    </source>
</evidence>
<evidence type="ECO:0000305" key="18"/>
<evidence type="ECO:0007744" key="19">
    <source>
    </source>
</evidence>
<evidence type="ECO:0007744" key="20">
    <source>
    </source>
</evidence>
<evidence type="ECO:0007744" key="21">
    <source>
    </source>
</evidence>
<evidence type="ECO:0007744" key="22">
    <source>
    </source>
</evidence>
<evidence type="ECO:0007744" key="23">
    <source>
    </source>
</evidence>
<evidence type="ECO:0007744" key="24">
    <source>
    </source>
</evidence>
<evidence type="ECO:0007744" key="25">
    <source>
    </source>
</evidence>
<evidence type="ECO:0007829" key="26">
    <source>
        <dbReference type="PDB" id="1QZP"/>
    </source>
</evidence>
<sequence length="405" mass="45514">MERLQKQPLTSPGSVSPSRDSSVPGSPSSIVAKMDNQVLGYKDLAAIPKDKAILDIERPDLMIYEPHFTYSLLEHVELPRSRERSLSPKSTSPPPSPEVWADSRSPGIISQASAPRTTGTPRTSLPHFHHPETSRPDSNIYKKPPIYKQRESVGGSPQTKHLIEDLIIESSKFPAAQPPDPNQPAKIETDYWPCPPSLAVVETEWRKRKASRRGAEEEEEEEDDDSGEEMKALRERQREELSKVTSNLGKMILKEEMEKSLPIRRKTRSLPDRTPFHTSLHQGTSKSSSLPAYGRTTLSRLQSTEFSPSGSETGSPGLQNGEGQRGRMDRGNSLPCVLEQKIYPYEMLVVTNKGRTKLPPGVDRMRLERHLSAEDFSRVFAMSPEEFGKLALWKRNELKKKASLF</sequence>
<organism>
    <name type="scientific">Homo sapiens</name>
    <name type="common">Human</name>
    <dbReference type="NCBI Taxonomy" id="9606"/>
    <lineage>
        <taxon>Eukaryota</taxon>
        <taxon>Metazoa</taxon>
        <taxon>Chordata</taxon>
        <taxon>Craniata</taxon>
        <taxon>Vertebrata</taxon>
        <taxon>Euteleostomi</taxon>
        <taxon>Mammalia</taxon>
        <taxon>Eutheria</taxon>
        <taxon>Euarchontoglires</taxon>
        <taxon>Primates</taxon>
        <taxon>Haplorrhini</taxon>
        <taxon>Catarrhini</taxon>
        <taxon>Hominidae</taxon>
        <taxon>Homo</taxon>
    </lineage>
</organism>